<feature type="chain" id="PRO_1000057699" description="Transcription elongation factor GreA">
    <location>
        <begin position="1"/>
        <end position="161"/>
    </location>
</feature>
<feature type="coiled-coil region" evidence="1">
    <location>
        <begin position="45"/>
        <end position="72"/>
    </location>
</feature>
<evidence type="ECO:0000255" key="1">
    <source>
        <dbReference type="HAMAP-Rule" id="MF_00105"/>
    </source>
</evidence>
<gene>
    <name evidence="1" type="primary">greA</name>
    <name type="ordered locus">Abu_0619</name>
</gene>
<accession>A8ESG0</accession>
<comment type="function">
    <text evidence="1">Necessary for efficient RNA polymerase transcription elongation past template-encoded arresting sites. The arresting sites in DNA have the property of trapping a certain fraction of elongating RNA polymerases that pass through, resulting in locked ternary complexes. Cleavage of the nascent transcript by cleavage factors such as GreA or GreB allows the resumption of elongation from the new 3'terminus. GreA releases sequences of 2 to 3 nucleotides.</text>
</comment>
<comment type="similarity">
    <text evidence="1">Belongs to the GreA/GreB family.</text>
</comment>
<proteinExistence type="inferred from homology"/>
<keyword id="KW-0175">Coiled coil</keyword>
<keyword id="KW-0238">DNA-binding</keyword>
<keyword id="KW-1185">Reference proteome</keyword>
<keyword id="KW-0804">Transcription</keyword>
<keyword id="KW-0805">Transcription regulation</keyword>
<organism>
    <name type="scientific">Aliarcobacter butzleri (strain RM4018)</name>
    <name type="common">Arcobacter butzleri</name>
    <dbReference type="NCBI Taxonomy" id="367737"/>
    <lineage>
        <taxon>Bacteria</taxon>
        <taxon>Pseudomonadati</taxon>
        <taxon>Campylobacterota</taxon>
        <taxon>Epsilonproteobacteria</taxon>
        <taxon>Campylobacterales</taxon>
        <taxon>Arcobacteraceae</taxon>
        <taxon>Aliarcobacter</taxon>
    </lineage>
</organism>
<protein>
    <recommendedName>
        <fullName evidence="1">Transcription elongation factor GreA</fullName>
    </recommendedName>
    <alternativeName>
        <fullName evidence="1">Transcript cleavage factor GreA</fullName>
    </alternativeName>
</protein>
<dbReference type="EMBL" id="CP000361">
    <property type="protein sequence ID" value="ABV66884.1"/>
    <property type="molecule type" value="Genomic_DNA"/>
</dbReference>
<dbReference type="RefSeq" id="WP_004510671.1">
    <property type="nucleotide sequence ID" value="NC_009850.1"/>
</dbReference>
<dbReference type="SMR" id="A8ESG0"/>
<dbReference type="STRING" id="367737.Abu_0619"/>
<dbReference type="GeneID" id="24303567"/>
<dbReference type="KEGG" id="abu:Abu_0619"/>
<dbReference type="eggNOG" id="COG0782">
    <property type="taxonomic scope" value="Bacteria"/>
</dbReference>
<dbReference type="HOGENOM" id="CLU_101379_2_0_7"/>
<dbReference type="Proteomes" id="UP000001136">
    <property type="component" value="Chromosome"/>
</dbReference>
<dbReference type="GO" id="GO:0003677">
    <property type="term" value="F:DNA binding"/>
    <property type="evidence" value="ECO:0007669"/>
    <property type="project" value="UniProtKB-UniRule"/>
</dbReference>
<dbReference type="GO" id="GO:0070063">
    <property type="term" value="F:RNA polymerase binding"/>
    <property type="evidence" value="ECO:0007669"/>
    <property type="project" value="InterPro"/>
</dbReference>
<dbReference type="GO" id="GO:0006354">
    <property type="term" value="P:DNA-templated transcription elongation"/>
    <property type="evidence" value="ECO:0007669"/>
    <property type="project" value="TreeGrafter"/>
</dbReference>
<dbReference type="GO" id="GO:0032784">
    <property type="term" value="P:regulation of DNA-templated transcription elongation"/>
    <property type="evidence" value="ECO:0007669"/>
    <property type="project" value="UniProtKB-UniRule"/>
</dbReference>
<dbReference type="FunFam" id="1.10.287.180:FF:000001">
    <property type="entry name" value="Transcription elongation factor GreA"/>
    <property type="match status" value="1"/>
</dbReference>
<dbReference type="FunFam" id="3.10.50.30:FF:000001">
    <property type="entry name" value="Transcription elongation factor GreA"/>
    <property type="match status" value="1"/>
</dbReference>
<dbReference type="Gene3D" id="3.10.50.30">
    <property type="entry name" value="Transcription elongation factor, GreA/GreB, C-terminal domain"/>
    <property type="match status" value="1"/>
</dbReference>
<dbReference type="Gene3D" id="1.10.287.180">
    <property type="entry name" value="Transcription elongation factor, GreA/GreB, N-terminal domain"/>
    <property type="match status" value="1"/>
</dbReference>
<dbReference type="HAMAP" id="MF_00105">
    <property type="entry name" value="GreA_GreB"/>
    <property type="match status" value="1"/>
</dbReference>
<dbReference type="InterPro" id="IPR036953">
    <property type="entry name" value="GreA/GreB_C_sf"/>
</dbReference>
<dbReference type="InterPro" id="IPR006359">
    <property type="entry name" value="Tscrpt_elong_fac_GreA"/>
</dbReference>
<dbReference type="InterPro" id="IPR028624">
    <property type="entry name" value="Tscrpt_elong_fac_GreA/B"/>
</dbReference>
<dbReference type="InterPro" id="IPR001437">
    <property type="entry name" value="Tscrpt_elong_fac_GreA/B_C"/>
</dbReference>
<dbReference type="InterPro" id="IPR023459">
    <property type="entry name" value="Tscrpt_elong_fac_GreA/B_fam"/>
</dbReference>
<dbReference type="InterPro" id="IPR022691">
    <property type="entry name" value="Tscrpt_elong_fac_GreA/B_N"/>
</dbReference>
<dbReference type="InterPro" id="IPR036805">
    <property type="entry name" value="Tscrpt_elong_fac_GreA/B_N_sf"/>
</dbReference>
<dbReference type="NCBIfam" id="TIGR01462">
    <property type="entry name" value="greA"/>
    <property type="match status" value="1"/>
</dbReference>
<dbReference type="NCBIfam" id="NF001261">
    <property type="entry name" value="PRK00226.1-2"/>
    <property type="match status" value="1"/>
</dbReference>
<dbReference type="NCBIfam" id="NF001263">
    <property type="entry name" value="PRK00226.1-4"/>
    <property type="match status" value="1"/>
</dbReference>
<dbReference type="PANTHER" id="PTHR30437">
    <property type="entry name" value="TRANSCRIPTION ELONGATION FACTOR GREA"/>
    <property type="match status" value="1"/>
</dbReference>
<dbReference type="PANTHER" id="PTHR30437:SF4">
    <property type="entry name" value="TRANSCRIPTION ELONGATION FACTOR GREA"/>
    <property type="match status" value="1"/>
</dbReference>
<dbReference type="Pfam" id="PF01272">
    <property type="entry name" value="GreA_GreB"/>
    <property type="match status" value="1"/>
</dbReference>
<dbReference type="Pfam" id="PF03449">
    <property type="entry name" value="GreA_GreB_N"/>
    <property type="match status" value="1"/>
</dbReference>
<dbReference type="PIRSF" id="PIRSF006092">
    <property type="entry name" value="GreA_GreB"/>
    <property type="match status" value="1"/>
</dbReference>
<dbReference type="SUPFAM" id="SSF54534">
    <property type="entry name" value="FKBP-like"/>
    <property type="match status" value="1"/>
</dbReference>
<dbReference type="SUPFAM" id="SSF46557">
    <property type="entry name" value="GreA transcript cleavage protein, N-terminal domain"/>
    <property type="match status" value="1"/>
</dbReference>
<reference key="1">
    <citation type="journal article" date="2007" name="PLoS ONE">
        <title>The complete genome sequence and analysis of the Epsilonproteobacterium Arcobacter butzleri.</title>
        <authorList>
            <person name="Miller W.G."/>
            <person name="Parker C.T."/>
            <person name="Rubenfield M."/>
            <person name="Mendz G.L."/>
            <person name="Woesten M.M.S.M."/>
            <person name="Ussery D.W."/>
            <person name="Stolz J.F."/>
            <person name="Binnewies T.T."/>
            <person name="Hallin P.F."/>
            <person name="Wang G."/>
            <person name="Malek J.A."/>
            <person name="Rogosin A."/>
            <person name="Stanker L.H."/>
            <person name="Mandrell R.E."/>
        </authorList>
    </citation>
    <scope>NUCLEOTIDE SEQUENCE [LARGE SCALE GENOMIC DNA]</scope>
    <source>
        <strain>RM4018</strain>
    </source>
</reference>
<sequence>MEKEPMTLAGYNKVTAELDFLKKTERPETVIALDEARQLGDLKENAEYHSAKEKLKLIDIQIAELNAVISKAVIIDPTTLPHDRVSFGSTIDLVDVDTDEEFTYTIVGGVESSAEKGMISFNSPLAKQLMGKEAGDELNATLPGGAKTFEILKVYYKEISL</sequence>
<name>GREA_ALIB4</name>